<protein>
    <recommendedName>
        <fullName>Progonadoliberin-1</fullName>
    </recommendedName>
    <alternativeName>
        <fullName>Progonadoliberin I</fullName>
    </alternativeName>
    <component>
        <recommendedName>
            <fullName>Gonadoliberin-1</fullName>
        </recommendedName>
        <alternativeName>
            <fullName>Gonadoliberin I</fullName>
        </alternativeName>
        <alternativeName>
            <fullName>Gonadotropin-releasing hormone I</fullName>
            <shortName>GnRH-I</shortName>
        </alternativeName>
        <alternativeName>
            <fullName>Luliberin I</fullName>
        </alternativeName>
        <alternativeName>
            <fullName>Luteinizing hormone-releasing hormone I</fullName>
            <shortName>LH-RH I</shortName>
        </alternativeName>
    </component>
    <component>
        <recommendedName>
            <fullName>GnRH-associated peptide 1</fullName>
        </recommendedName>
        <alternativeName>
            <fullName>GnRH-associated peptide I</fullName>
        </alternativeName>
    </component>
</protein>
<accession>Q28588</accession>
<organism>
    <name type="scientific">Ovis aries</name>
    <name type="common">Sheep</name>
    <dbReference type="NCBI Taxonomy" id="9940"/>
    <lineage>
        <taxon>Eukaryota</taxon>
        <taxon>Metazoa</taxon>
        <taxon>Chordata</taxon>
        <taxon>Craniata</taxon>
        <taxon>Vertebrata</taxon>
        <taxon>Euteleostomi</taxon>
        <taxon>Mammalia</taxon>
        <taxon>Eutheria</taxon>
        <taxon>Laurasiatheria</taxon>
        <taxon>Artiodactyla</taxon>
        <taxon>Ruminantia</taxon>
        <taxon>Pecora</taxon>
        <taxon>Bovidae</taxon>
        <taxon>Caprinae</taxon>
        <taxon>Ovis</taxon>
    </lineage>
</organism>
<comment type="function">
    <text>Stimulates the secretion of gonadotropins; it stimulates the secretion of both luteinizing and follicle-stimulating hormones.</text>
</comment>
<comment type="subcellular location">
    <subcellularLocation>
        <location>Secreted</location>
    </subcellularLocation>
</comment>
<comment type="similarity">
    <text evidence="2">Belongs to the GnRH family.</text>
</comment>
<evidence type="ECO:0000269" key="1">
    <source>
    </source>
</evidence>
<evidence type="ECO:0000305" key="2"/>
<evidence type="ECO:0007829" key="3">
    <source>
        <dbReference type="PDB" id="1YY1"/>
    </source>
</evidence>
<reference key="1">
    <citation type="submission" date="1993-10" db="EMBL/GenBank/DDBJ databases">
        <authorList>
            <person name="Rodriguez R.E."/>
            <person name="Wise M.E."/>
        </authorList>
    </citation>
    <scope>NUCLEOTIDE SEQUENCE [MRNA] OF 12-61</scope>
    <source>
        <strain>Western range</strain>
        <tissue>Hypothalamus</tissue>
    </source>
</reference>
<reference key="2">
    <citation type="journal article" date="1972" name="Proc. Natl. Acad. Sci. U.S.A.">
        <title>Primary structure of the ovine hypothalamic luteinizing hormone-releasing factor (LRF) (LH-hypothalamus-LRF-gas chromatography-mass spectrometry-decapeptide-Edman degradation).</title>
        <authorList>
            <person name="Burgus R."/>
            <person name="Butcher M."/>
            <person name="Amoss M."/>
            <person name="Ling N."/>
            <person name="Monahan M."/>
            <person name="Rivier J."/>
            <person name="Fellows R."/>
            <person name="Blackwell R."/>
            <person name="Vale W."/>
            <person name="Guillemin R."/>
        </authorList>
    </citation>
    <scope>PROTEIN SEQUENCE OF 1-10</scope>
    <scope>PYROGLUTAMATE FORMATION AT GLN-1</scope>
    <scope>AMIDATION AT GLY-10</scope>
</reference>
<name>GON1_SHEEP</name>
<feature type="chain" id="PRO_0000012413" description="Progonadoliberin-1">
    <location>
        <begin position="1"/>
        <end position="61" status="greater than"/>
    </location>
</feature>
<feature type="peptide" id="PRO_0000012414" description="Gonadoliberin-1">
    <location>
        <begin position="1"/>
        <end position="10"/>
    </location>
</feature>
<feature type="peptide" id="PRO_0000012415" description="GnRH-associated peptide 1">
    <location>
        <begin position="14"/>
        <end position="61" status="greater than"/>
    </location>
</feature>
<feature type="site" description="Appears to be essential for biological activity">
    <location>
        <position position="3"/>
    </location>
</feature>
<feature type="modified residue" description="Pyrrolidone carboxylic acid" evidence="1">
    <location>
        <position position="1"/>
    </location>
</feature>
<feature type="modified residue" description="Glycine amide" evidence="1">
    <location>
        <position position="10"/>
    </location>
</feature>
<feature type="non-terminal residue">
    <location>
        <position position="1"/>
    </location>
</feature>
<feature type="non-terminal residue">
    <location>
        <position position="61"/>
    </location>
</feature>
<feature type="strand" evidence="3">
    <location>
        <begin position="6"/>
        <end position="9"/>
    </location>
</feature>
<keyword id="KW-0002">3D-structure</keyword>
<keyword id="KW-0027">Amidation</keyword>
<keyword id="KW-0165">Cleavage on pair of basic residues</keyword>
<keyword id="KW-0903">Direct protein sequencing</keyword>
<keyword id="KW-0372">Hormone</keyword>
<keyword id="KW-0873">Pyrrolidone carboxylic acid</keyword>
<keyword id="KW-1185">Reference proteome</keyword>
<keyword id="KW-0964">Secreted</keyword>
<dbReference type="EMBL" id="U02517">
    <property type="protein sequence ID" value="AAA03433.1"/>
    <property type="molecule type" value="mRNA"/>
</dbReference>
<dbReference type="PIR" id="A93780">
    <property type="entry name" value="RHSHG"/>
</dbReference>
<dbReference type="PDB" id="1YY1">
    <property type="method" value="NMR"/>
    <property type="chains" value="A=2-10"/>
</dbReference>
<dbReference type="PDBsum" id="1YY1"/>
<dbReference type="SMR" id="Q28588"/>
<dbReference type="STRING" id="9940.ENSOARP00000010607"/>
<dbReference type="PaxDb" id="9940-ENSOARP00000010607"/>
<dbReference type="eggNOG" id="ENOG502S8C8">
    <property type="taxonomic scope" value="Eukaryota"/>
</dbReference>
<dbReference type="EvolutionaryTrace" id="Q28588"/>
<dbReference type="Proteomes" id="UP000002356">
    <property type="component" value="Unplaced"/>
</dbReference>
<dbReference type="GO" id="GO:0005615">
    <property type="term" value="C:extracellular space"/>
    <property type="evidence" value="ECO:0000250"/>
    <property type="project" value="UniProtKB"/>
</dbReference>
<dbReference type="GO" id="GO:0005183">
    <property type="term" value="F:gonadotropin hormone-releasing hormone activity"/>
    <property type="evidence" value="ECO:0007669"/>
    <property type="project" value="InterPro"/>
</dbReference>
<dbReference type="GO" id="GO:0031530">
    <property type="term" value="F:gonadotropin-releasing hormone receptor binding"/>
    <property type="evidence" value="ECO:0007669"/>
    <property type="project" value="TreeGrafter"/>
</dbReference>
<dbReference type="GO" id="GO:0046880">
    <property type="term" value="P:regulation of follicle-stimulating hormone secretion"/>
    <property type="evidence" value="ECO:0000315"/>
    <property type="project" value="AgBase"/>
</dbReference>
<dbReference type="GO" id="GO:0033684">
    <property type="term" value="P:regulation of luteinizing hormone secretion"/>
    <property type="evidence" value="ECO:0000315"/>
    <property type="project" value="AgBase"/>
</dbReference>
<dbReference type="InterPro" id="IPR002012">
    <property type="entry name" value="GnRH"/>
</dbReference>
<dbReference type="InterPro" id="IPR019792">
    <property type="entry name" value="Gonadoliberin"/>
</dbReference>
<dbReference type="InterPro" id="IPR004079">
    <property type="entry name" value="Gonadoliberin_I_precursor"/>
</dbReference>
<dbReference type="PANTHER" id="PTHR10522">
    <property type="entry name" value="GONADOLIBERIN"/>
    <property type="match status" value="1"/>
</dbReference>
<dbReference type="PANTHER" id="PTHR10522:SF0">
    <property type="entry name" value="PROGONADOLIBERIN-1"/>
    <property type="match status" value="1"/>
</dbReference>
<dbReference type="Pfam" id="PF00446">
    <property type="entry name" value="GnRH"/>
    <property type="match status" value="1"/>
</dbReference>
<dbReference type="PRINTS" id="PR01541">
    <property type="entry name" value="GONADOLIBRNI"/>
</dbReference>
<dbReference type="PROSITE" id="PS00473">
    <property type="entry name" value="GNRH"/>
    <property type="match status" value="1"/>
</dbReference>
<proteinExistence type="evidence at protein level"/>
<sequence>QHWSYGLRPGGKRNAKNVIDSFQEIAKEVDQPVEPKCCGCIVHQSHSPLRDLKAALESLIE</sequence>
<gene>
    <name type="primary">GNRH1</name>
    <name type="synonym">GNRH</name>
    <name type="synonym">LHRH</name>
</gene>